<accession>Q57LQ8</accession>
<sequence length="141" mass="16285">MEIRVFRQEDFEEVITLWERCDLLRPWNDPEMDIERKVNHDVSLFLVAEVSGEVVGTVMGGYDGHRGSAYYLGVHPEFRGRGIANALLNRLEKKLIARGCPKIQIMVRDDNDVVLGMYERLGYEHSDALSLGKRLIEDEEY</sequence>
<organism>
    <name type="scientific">Salmonella choleraesuis (strain SC-B67)</name>
    <dbReference type="NCBI Taxonomy" id="321314"/>
    <lineage>
        <taxon>Bacteria</taxon>
        <taxon>Pseudomonadati</taxon>
        <taxon>Pseudomonadota</taxon>
        <taxon>Gammaproteobacteria</taxon>
        <taxon>Enterobacterales</taxon>
        <taxon>Enterobacteriaceae</taxon>
        <taxon>Salmonella</taxon>
    </lineage>
</organism>
<comment type="similarity">
    <text evidence="1">Belongs to the acetyltransferase family. YpeA subfamily.</text>
</comment>
<comment type="sequence caution" evidence="2">
    <conflict type="erroneous initiation">
        <sequence resource="EMBL-CDS" id="AAX66354"/>
    </conflict>
</comment>
<gene>
    <name evidence="1" type="primary">ypeA</name>
    <name type="ordered locus">SCH_2448</name>
</gene>
<name>YPEA_SALCH</name>
<feature type="chain" id="PRO_0000298443" description="Acetyltransferase YpeA">
    <location>
        <begin position="1"/>
        <end position="141"/>
    </location>
</feature>
<feature type="domain" description="N-acetyltransferase" evidence="1">
    <location>
        <begin position="1"/>
        <end position="141"/>
    </location>
</feature>
<reference key="1">
    <citation type="journal article" date="2005" name="Nucleic Acids Res.">
        <title>The genome sequence of Salmonella enterica serovar Choleraesuis, a highly invasive and resistant zoonotic pathogen.</title>
        <authorList>
            <person name="Chiu C.-H."/>
            <person name="Tang P."/>
            <person name="Chu C."/>
            <person name="Hu S."/>
            <person name="Bao Q."/>
            <person name="Yu J."/>
            <person name="Chou Y.-Y."/>
            <person name="Wang H.-S."/>
            <person name="Lee Y.-S."/>
        </authorList>
    </citation>
    <scope>NUCLEOTIDE SEQUENCE [LARGE SCALE GENOMIC DNA]</scope>
    <source>
        <strain>SC-B67</strain>
    </source>
</reference>
<protein>
    <recommendedName>
        <fullName evidence="1">Acetyltransferase YpeA</fullName>
        <ecNumber evidence="1">2.3.1.-</ecNumber>
    </recommendedName>
</protein>
<proteinExistence type="inferred from homology"/>
<keyword id="KW-0012">Acyltransferase</keyword>
<keyword id="KW-0808">Transferase</keyword>
<dbReference type="EC" id="2.3.1.-" evidence="1"/>
<dbReference type="EMBL" id="AE017220">
    <property type="protein sequence ID" value="AAX66354.1"/>
    <property type="status" value="ALT_INIT"/>
    <property type="molecule type" value="Genomic_DNA"/>
</dbReference>
<dbReference type="RefSeq" id="WP_000406008.1">
    <property type="nucleotide sequence ID" value="NC_006905.1"/>
</dbReference>
<dbReference type="SMR" id="Q57LQ8"/>
<dbReference type="KEGG" id="sec:SCH_2448"/>
<dbReference type="HOGENOM" id="CLU_013985_34_1_6"/>
<dbReference type="Proteomes" id="UP000000538">
    <property type="component" value="Chromosome"/>
</dbReference>
<dbReference type="GO" id="GO:0016747">
    <property type="term" value="F:acyltransferase activity, transferring groups other than amino-acyl groups"/>
    <property type="evidence" value="ECO:0007669"/>
    <property type="project" value="UniProtKB-UniRule"/>
</dbReference>
<dbReference type="CDD" id="cd04301">
    <property type="entry name" value="NAT_SF"/>
    <property type="match status" value="1"/>
</dbReference>
<dbReference type="Gene3D" id="3.40.630.30">
    <property type="match status" value="1"/>
</dbReference>
<dbReference type="HAMAP" id="MF_01127">
    <property type="entry name" value="Acetyltransf_YpeA"/>
    <property type="match status" value="1"/>
</dbReference>
<dbReference type="InterPro" id="IPR023072">
    <property type="entry name" value="Acetyltransferase_YpeA"/>
</dbReference>
<dbReference type="InterPro" id="IPR017255">
    <property type="entry name" value="AcTrfase_GNAT_prd"/>
</dbReference>
<dbReference type="InterPro" id="IPR016181">
    <property type="entry name" value="Acyl_CoA_acyltransferase"/>
</dbReference>
<dbReference type="InterPro" id="IPR000182">
    <property type="entry name" value="GNAT_dom"/>
</dbReference>
<dbReference type="NCBIfam" id="NF002959">
    <property type="entry name" value="PRK03624.1"/>
    <property type="match status" value="1"/>
</dbReference>
<dbReference type="PANTHER" id="PTHR43072:SF51">
    <property type="entry name" value="ABC SUPERFAMILY TRANSPORT PROTEIN"/>
    <property type="match status" value="1"/>
</dbReference>
<dbReference type="PANTHER" id="PTHR43072">
    <property type="entry name" value="N-ACETYLTRANSFERASE"/>
    <property type="match status" value="1"/>
</dbReference>
<dbReference type="Pfam" id="PF00583">
    <property type="entry name" value="Acetyltransf_1"/>
    <property type="match status" value="1"/>
</dbReference>
<dbReference type="PIRSF" id="PIRSF037663">
    <property type="entry name" value="Acetyltransf_GNAT_prd"/>
    <property type="match status" value="1"/>
</dbReference>
<dbReference type="SUPFAM" id="SSF55729">
    <property type="entry name" value="Acyl-CoA N-acyltransferases (Nat)"/>
    <property type="match status" value="1"/>
</dbReference>
<dbReference type="PROSITE" id="PS51186">
    <property type="entry name" value="GNAT"/>
    <property type="match status" value="1"/>
</dbReference>
<evidence type="ECO:0000255" key="1">
    <source>
        <dbReference type="HAMAP-Rule" id="MF_01127"/>
    </source>
</evidence>
<evidence type="ECO:0000305" key="2"/>